<dbReference type="EMBL" id="AM889285">
    <property type="protein sequence ID" value="CAP57027.1"/>
    <property type="molecule type" value="Genomic_DNA"/>
</dbReference>
<dbReference type="EMBL" id="CP001189">
    <property type="protein sequence ID" value="ACI53010.1"/>
    <property type="molecule type" value="Genomic_DNA"/>
</dbReference>
<dbReference type="RefSeq" id="WP_010506446.1">
    <property type="nucleotide sequence ID" value="NC_011365.1"/>
</dbReference>
<dbReference type="SMR" id="A9HS49"/>
<dbReference type="STRING" id="272568.GDI3084"/>
<dbReference type="GeneID" id="98313047"/>
<dbReference type="KEGG" id="gdi:GDI3084"/>
<dbReference type="KEGG" id="gdj:Gdia_3283"/>
<dbReference type="eggNOG" id="COG0828">
    <property type="taxonomic scope" value="Bacteria"/>
</dbReference>
<dbReference type="HOGENOM" id="CLU_159258_0_1_5"/>
<dbReference type="OrthoDB" id="9811907at2"/>
<dbReference type="Proteomes" id="UP000001176">
    <property type="component" value="Chromosome"/>
</dbReference>
<dbReference type="GO" id="GO:1990904">
    <property type="term" value="C:ribonucleoprotein complex"/>
    <property type="evidence" value="ECO:0007669"/>
    <property type="project" value="UniProtKB-KW"/>
</dbReference>
<dbReference type="GO" id="GO:0005840">
    <property type="term" value="C:ribosome"/>
    <property type="evidence" value="ECO:0007669"/>
    <property type="project" value="UniProtKB-KW"/>
</dbReference>
<dbReference type="GO" id="GO:0003735">
    <property type="term" value="F:structural constituent of ribosome"/>
    <property type="evidence" value="ECO:0007669"/>
    <property type="project" value="InterPro"/>
</dbReference>
<dbReference type="GO" id="GO:0006412">
    <property type="term" value="P:translation"/>
    <property type="evidence" value="ECO:0007669"/>
    <property type="project" value="UniProtKB-UniRule"/>
</dbReference>
<dbReference type="Gene3D" id="1.20.5.1150">
    <property type="entry name" value="Ribosomal protein S8"/>
    <property type="match status" value="1"/>
</dbReference>
<dbReference type="HAMAP" id="MF_00358">
    <property type="entry name" value="Ribosomal_bS21"/>
    <property type="match status" value="1"/>
</dbReference>
<dbReference type="InterPro" id="IPR001911">
    <property type="entry name" value="Ribosomal_bS21"/>
</dbReference>
<dbReference type="InterPro" id="IPR018278">
    <property type="entry name" value="Ribosomal_bS21_CS"/>
</dbReference>
<dbReference type="InterPro" id="IPR038380">
    <property type="entry name" value="Ribosomal_bS21_sf"/>
</dbReference>
<dbReference type="NCBIfam" id="TIGR00030">
    <property type="entry name" value="S21p"/>
    <property type="match status" value="1"/>
</dbReference>
<dbReference type="PANTHER" id="PTHR21109">
    <property type="entry name" value="MITOCHONDRIAL 28S RIBOSOMAL PROTEIN S21"/>
    <property type="match status" value="1"/>
</dbReference>
<dbReference type="PANTHER" id="PTHR21109:SF0">
    <property type="entry name" value="SMALL RIBOSOMAL SUBUNIT PROTEIN BS21M"/>
    <property type="match status" value="1"/>
</dbReference>
<dbReference type="Pfam" id="PF01165">
    <property type="entry name" value="Ribosomal_S21"/>
    <property type="match status" value="1"/>
</dbReference>
<dbReference type="PROSITE" id="PS01181">
    <property type="entry name" value="RIBOSOMAL_S21"/>
    <property type="match status" value="1"/>
</dbReference>
<comment type="similarity">
    <text evidence="1">Belongs to the bacterial ribosomal protein bS21 family.</text>
</comment>
<keyword id="KW-1185">Reference proteome</keyword>
<keyword id="KW-0687">Ribonucleoprotein</keyword>
<keyword id="KW-0689">Ribosomal protein</keyword>
<protein>
    <recommendedName>
        <fullName evidence="1">Small ribosomal subunit protein bS21</fullName>
    </recommendedName>
    <alternativeName>
        <fullName evidence="3">30S ribosomal protein S21</fullName>
    </alternativeName>
</protein>
<organism>
    <name type="scientific">Gluconacetobacter diazotrophicus (strain ATCC 49037 / DSM 5601 / CCUG 37298 / CIP 103539 / LMG 7603 / PAl5)</name>
    <dbReference type="NCBI Taxonomy" id="272568"/>
    <lineage>
        <taxon>Bacteria</taxon>
        <taxon>Pseudomonadati</taxon>
        <taxon>Pseudomonadota</taxon>
        <taxon>Alphaproteobacteria</taxon>
        <taxon>Acetobacterales</taxon>
        <taxon>Acetobacteraceae</taxon>
        <taxon>Gluconacetobacter</taxon>
    </lineage>
</organism>
<name>RS21_GLUDA</name>
<feature type="chain" id="PRO_1000079409" description="Small ribosomal subunit protein bS21">
    <location>
        <begin position="1"/>
        <end position="67"/>
    </location>
</feature>
<feature type="region of interest" description="Disordered" evidence="2">
    <location>
        <begin position="37"/>
        <end position="67"/>
    </location>
</feature>
<feature type="compositionally biased region" description="Basic and acidic residues" evidence="2">
    <location>
        <begin position="37"/>
        <end position="52"/>
    </location>
</feature>
<proteinExistence type="inferred from homology"/>
<reference key="1">
    <citation type="journal article" date="2009" name="BMC Genomics">
        <title>Complete genome sequence of the sugarcane nitrogen-fixing endophyte Gluconacetobacter diazotrophicus Pal5.</title>
        <authorList>
            <person name="Bertalan M."/>
            <person name="Albano R."/>
            <person name="de Padua V."/>
            <person name="Rouws L."/>
            <person name="Rojas C."/>
            <person name="Hemerly A."/>
            <person name="Teixeira K."/>
            <person name="Schwab S."/>
            <person name="Araujo J."/>
            <person name="Oliveira A."/>
            <person name="Franca L."/>
            <person name="Magalhaes V."/>
            <person name="Alqueres S."/>
            <person name="Cardoso A."/>
            <person name="Almeida W."/>
            <person name="Loureiro M.M."/>
            <person name="Nogueira E."/>
            <person name="Cidade D."/>
            <person name="Oliveira D."/>
            <person name="Simao T."/>
            <person name="Macedo J."/>
            <person name="Valadao A."/>
            <person name="Dreschsel M."/>
            <person name="Freitas F."/>
            <person name="Vidal M."/>
            <person name="Guedes H."/>
            <person name="Rodrigues E."/>
            <person name="Meneses C."/>
            <person name="Brioso P."/>
            <person name="Pozzer L."/>
            <person name="Figueiredo D."/>
            <person name="Montano H."/>
            <person name="Junior J."/>
            <person name="de Souza Filho G."/>
            <person name="Martin Quintana Flores V."/>
            <person name="Ferreira B."/>
            <person name="Branco A."/>
            <person name="Gonzalez P."/>
            <person name="Guillobel H."/>
            <person name="Lemos M."/>
            <person name="Seibel L."/>
            <person name="Macedo J."/>
            <person name="Alves-Ferreira M."/>
            <person name="Sachetto-Martins G."/>
            <person name="Coelho A."/>
            <person name="Santos E."/>
            <person name="Amaral G."/>
            <person name="Neves A."/>
            <person name="Pacheco A.B."/>
            <person name="Carvalho D."/>
            <person name="Lery L."/>
            <person name="Bisch P."/>
            <person name="Rossle S.C."/>
            <person name="Urmenyi T."/>
            <person name="Rael Pereira A."/>
            <person name="Silva R."/>
            <person name="Rondinelli E."/>
            <person name="von Kruger W."/>
            <person name="Martins O."/>
            <person name="Baldani J.I."/>
            <person name="Ferreira P.C."/>
        </authorList>
    </citation>
    <scope>NUCLEOTIDE SEQUENCE [LARGE SCALE GENOMIC DNA]</scope>
    <source>
        <strain>ATCC 49037 / DSM 5601 / CCUG 37298 / CIP 103539 / LMG 7603 / PAl5</strain>
    </source>
</reference>
<reference key="2">
    <citation type="journal article" date="2010" name="Stand. Genomic Sci.">
        <title>Two genome sequences of the same bacterial strain, Gluconacetobacter diazotrophicus PAl 5, suggest a new standard in genome sequence submission.</title>
        <authorList>
            <person name="Giongo A."/>
            <person name="Tyler H.L."/>
            <person name="Zipperer U.N."/>
            <person name="Triplett E.W."/>
        </authorList>
    </citation>
    <scope>NUCLEOTIDE SEQUENCE [LARGE SCALE GENOMIC DNA]</scope>
    <source>
        <strain>ATCC 49037 / DSM 5601 / CCUG 37298 / CIP 103539 / LMG 7603 / PAl5</strain>
    </source>
</reference>
<evidence type="ECO:0000255" key="1">
    <source>
        <dbReference type="HAMAP-Rule" id="MF_00358"/>
    </source>
</evidence>
<evidence type="ECO:0000256" key="2">
    <source>
        <dbReference type="SAM" id="MobiDB-lite"/>
    </source>
</evidence>
<evidence type="ECO:0000305" key="3"/>
<gene>
    <name evidence="1" type="primary">rpsU</name>
    <name type="ordered locus">GDI3084</name>
    <name type="ordered locus">Gdia_3283</name>
</gene>
<accession>A9HS49</accession>
<accession>B5ZL68</accession>
<sequence length="67" mass="8198">MQVLVRDNNVDQALKALKKKMQREGIFREMKLRRHYEKPSERKAREAAEAVRRARKMERKRLEREGF</sequence>